<keyword id="KW-0028">Amino-acid biosynthesis</keyword>
<keyword id="KW-0963">Cytoplasm</keyword>
<keyword id="KW-0368">Histidine biosynthesis</keyword>
<keyword id="KW-0456">Lyase</keyword>
<keyword id="KW-1185">Reference proteome</keyword>
<evidence type="ECO:0000250" key="1"/>
<evidence type="ECO:0000255" key="2"/>
<evidence type="ECO:0000305" key="3"/>
<protein>
    <recommendedName>
        <fullName>Imidazole glycerol phosphate synthase subunit HisF</fullName>
        <ecNumber>4.3.2.10</ecNumber>
    </recommendedName>
    <alternativeName>
        <fullName>IGP synthase cyclase subunit</fullName>
    </alternativeName>
    <alternativeName>
        <fullName>IGP synthase subunit HisF</fullName>
    </alternativeName>
    <alternativeName>
        <fullName>ImGP synthase subunit HisF</fullName>
        <shortName>IGPS subunit HisF</shortName>
    </alternativeName>
</protein>
<gene>
    <name type="primary">hisF</name>
    <name type="ordered locus">MT1641</name>
</gene>
<reference key="1">
    <citation type="journal article" date="2002" name="J. Bacteriol.">
        <title>Whole-genome comparison of Mycobacterium tuberculosis clinical and laboratory strains.</title>
        <authorList>
            <person name="Fleischmann R.D."/>
            <person name="Alland D."/>
            <person name="Eisen J.A."/>
            <person name="Carpenter L."/>
            <person name="White O."/>
            <person name="Peterson J.D."/>
            <person name="DeBoy R.T."/>
            <person name="Dodson R.J."/>
            <person name="Gwinn M.L."/>
            <person name="Haft D.H."/>
            <person name="Hickey E.K."/>
            <person name="Kolonay J.F."/>
            <person name="Nelson W.C."/>
            <person name="Umayam L.A."/>
            <person name="Ermolaeva M.D."/>
            <person name="Salzberg S.L."/>
            <person name="Delcher A."/>
            <person name="Utterback T.R."/>
            <person name="Weidman J.F."/>
            <person name="Khouri H.M."/>
            <person name="Gill J."/>
            <person name="Mikula A."/>
            <person name="Bishai W."/>
            <person name="Jacobs W.R. Jr."/>
            <person name="Venter J.C."/>
            <person name="Fraser C.M."/>
        </authorList>
    </citation>
    <scope>NUCLEOTIDE SEQUENCE [LARGE SCALE GENOMIC DNA]</scope>
    <source>
        <strain>CDC 1551 / Oshkosh</strain>
    </source>
</reference>
<dbReference type="EC" id="4.3.2.10"/>
<dbReference type="EMBL" id="AE000516">
    <property type="protein sequence ID" value="AAK45909.1"/>
    <property type="molecule type" value="Genomic_DNA"/>
</dbReference>
<dbReference type="PIR" id="D70819">
    <property type="entry name" value="D70819"/>
</dbReference>
<dbReference type="RefSeq" id="WP_003898942.1">
    <property type="nucleotide sequence ID" value="NZ_KK341227.1"/>
</dbReference>
<dbReference type="SMR" id="P9WMM2"/>
<dbReference type="GeneID" id="45425573"/>
<dbReference type="KEGG" id="mtc:MT1641"/>
<dbReference type="PATRIC" id="fig|83331.31.peg.1763"/>
<dbReference type="HOGENOM" id="CLU_048577_4_0_11"/>
<dbReference type="UniPathway" id="UPA00031">
    <property type="reaction ID" value="UER00010"/>
</dbReference>
<dbReference type="Proteomes" id="UP000001020">
    <property type="component" value="Chromosome"/>
</dbReference>
<dbReference type="GO" id="GO:0005737">
    <property type="term" value="C:cytoplasm"/>
    <property type="evidence" value="ECO:0007669"/>
    <property type="project" value="UniProtKB-SubCell"/>
</dbReference>
<dbReference type="GO" id="GO:0000107">
    <property type="term" value="F:imidazoleglycerol-phosphate synthase activity"/>
    <property type="evidence" value="ECO:0007669"/>
    <property type="project" value="UniProtKB-UniRule"/>
</dbReference>
<dbReference type="GO" id="GO:0016829">
    <property type="term" value="F:lyase activity"/>
    <property type="evidence" value="ECO:0007669"/>
    <property type="project" value="UniProtKB-KW"/>
</dbReference>
<dbReference type="GO" id="GO:0000105">
    <property type="term" value="P:L-histidine biosynthetic process"/>
    <property type="evidence" value="ECO:0007669"/>
    <property type="project" value="UniProtKB-UniRule"/>
</dbReference>
<dbReference type="CDD" id="cd04731">
    <property type="entry name" value="HisF"/>
    <property type="match status" value="1"/>
</dbReference>
<dbReference type="FunFam" id="3.20.20.70:FF:000006">
    <property type="entry name" value="Imidazole glycerol phosphate synthase subunit HisF"/>
    <property type="match status" value="1"/>
</dbReference>
<dbReference type="Gene3D" id="3.20.20.70">
    <property type="entry name" value="Aldolase class I"/>
    <property type="match status" value="1"/>
</dbReference>
<dbReference type="HAMAP" id="MF_01013">
    <property type="entry name" value="HisF"/>
    <property type="match status" value="1"/>
</dbReference>
<dbReference type="InterPro" id="IPR013785">
    <property type="entry name" value="Aldolase_TIM"/>
</dbReference>
<dbReference type="InterPro" id="IPR006062">
    <property type="entry name" value="His_biosynth"/>
</dbReference>
<dbReference type="InterPro" id="IPR004651">
    <property type="entry name" value="HisF"/>
</dbReference>
<dbReference type="InterPro" id="IPR050064">
    <property type="entry name" value="IGPS_HisA/HisF"/>
</dbReference>
<dbReference type="InterPro" id="IPR011060">
    <property type="entry name" value="RibuloseP-bd_barrel"/>
</dbReference>
<dbReference type="NCBIfam" id="TIGR00735">
    <property type="entry name" value="hisF"/>
    <property type="match status" value="1"/>
</dbReference>
<dbReference type="PANTHER" id="PTHR21235:SF2">
    <property type="entry name" value="IMIDAZOLE GLYCEROL PHOSPHATE SYNTHASE HISHF"/>
    <property type="match status" value="1"/>
</dbReference>
<dbReference type="PANTHER" id="PTHR21235">
    <property type="entry name" value="IMIDAZOLE GLYCEROL PHOSPHATE SYNTHASE SUBUNIT HISF/H IGP SYNTHASE SUBUNIT HISF/H"/>
    <property type="match status" value="1"/>
</dbReference>
<dbReference type="Pfam" id="PF00977">
    <property type="entry name" value="His_biosynth"/>
    <property type="match status" value="1"/>
</dbReference>
<dbReference type="SUPFAM" id="SSF51366">
    <property type="entry name" value="Ribulose-phoshate binding barrel"/>
    <property type="match status" value="1"/>
</dbReference>
<comment type="function">
    <text evidence="1">IGPS catalyzes the conversion of PRFAR and glutamine to IGP, AICAR and glutamate. The HisF subunit catalyzes the cyclization activity that produces IGP and AICAR from PRFAR using the ammonia provided by the HisH subunit (By similarity).</text>
</comment>
<comment type="catalytic activity">
    <reaction>
        <text>5-[(5-phospho-1-deoxy-D-ribulos-1-ylimino)methylamino]-1-(5-phospho-beta-D-ribosyl)imidazole-4-carboxamide + L-glutamine = D-erythro-1-(imidazol-4-yl)glycerol 3-phosphate + 5-amino-1-(5-phospho-beta-D-ribosyl)imidazole-4-carboxamide + L-glutamate + H(+)</text>
        <dbReference type="Rhea" id="RHEA:24793"/>
        <dbReference type="ChEBI" id="CHEBI:15378"/>
        <dbReference type="ChEBI" id="CHEBI:29985"/>
        <dbReference type="ChEBI" id="CHEBI:58278"/>
        <dbReference type="ChEBI" id="CHEBI:58359"/>
        <dbReference type="ChEBI" id="CHEBI:58475"/>
        <dbReference type="ChEBI" id="CHEBI:58525"/>
        <dbReference type="EC" id="4.3.2.10"/>
    </reaction>
</comment>
<comment type="pathway">
    <text>Amino-acid biosynthesis; L-histidine biosynthesis; L-histidine from 5-phospho-alpha-D-ribose 1-diphosphate: step 5/9.</text>
</comment>
<comment type="subunit">
    <text evidence="1">Heterodimer of HisH and HisF.</text>
</comment>
<comment type="subcellular location">
    <subcellularLocation>
        <location evidence="1">Cytoplasm</location>
    </subcellularLocation>
</comment>
<comment type="similarity">
    <text evidence="3">Belongs to the HisA/HisF family.</text>
</comment>
<feature type="chain" id="PRO_0000427279" description="Imidazole glycerol phosphate synthase subunit HisF">
    <location>
        <begin position="1"/>
        <end position="267"/>
    </location>
</feature>
<feature type="active site" evidence="2">
    <location>
        <position position="22"/>
    </location>
</feature>
<feature type="active site" evidence="2">
    <location>
        <position position="141"/>
    </location>
</feature>
<proteinExistence type="inferred from homology"/>
<name>HIS6_MYCTO</name>
<accession>P9WMM2</accession>
<accession>L0T9Y9</accession>
<accession>O53908</accession>
<organism>
    <name type="scientific">Mycobacterium tuberculosis (strain CDC 1551 / Oshkosh)</name>
    <dbReference type="NCBI Taxonomy" id="83331"/>
    <lineage>
        <taxon>Bacteria</taxon>
        <taxon>Bacillati</taxon>
        <taxon>Actinomycetota</taxon>
        <taxon>Actinomycetes</taxon>
        <taxon>Mycobacteriales</taxon>
        <taxon>Mycobacteriaceae</taxon>
        <taxon>Mycobacterium</taxon>
        <taxon>Mycobacterium tuberculosis complex</taxon>
    </lineage>
</organism>
<sequence length="267" mass="27221">MYADRDLPGAGGLAVRVIPCLDVDDGRVVKGVNFENLRDAGDPVELAAVYDAEGADELTFLDVTASSSGRATMLEVVRRTAEQVFIPLTVGGGVRTVADVDSLLRAGADKVAVNTAAIACPDLLADMARQFGSQCIVLSVDARTVPVGSAPTPSGWEVTTHGGRRGTGMDAVQWAARGADLGVGEILLNSMDADGTKAGFDLALLRAVRAAVTVPVIASGGAGAVEHFAPAVAAGADAVLAASVFHFRELTIGQVKAALAAEGITVR</sequence>